<dbReference type="EC" id="5.6.2.2" evidence="1"/>
<dbReference type="EMBL" id="AE003852">
    <property type="protein sequence ID" value="AAF93193.1"/>
    <property type="molecule type" value="Genomic_DNA"/>
</dbReference>
<dbReference type="PIR" id="H82376">
    <property type="entry name" value="H82376"/>
</dbReference>
<dbReference type="RefSeq" id="NP_229675.2">
    <property type="nucleotide sequence ID" value="NC_002505.1"/>
</dbReference>
<dbReference type="RefSeq" id="WP_000070020.1">
    <property type="nucleotide sequence ID" value="NZ_LT906614.1"/>
</dbReference>
<dbReference type="SMR" id="Q9KVX3"/>
<dbReference type="STRING" id="243277.VC_0015"/>
<dbReference type="DNASU" id="2615137"/>
<dbReference type="EnsemblBacteria" id="AAF93193">
    <property type="protein sequence ID" value="AAF93193"/>
    <property type="gene ID" value="VC_0015"/>
</dbReference>
<dbReference type="KEGG" id="vch:VC_0015"/>
<dbReference type="PATRIC" id="fig|243277.26.peg.14"/>
<dbReference type="eggNOG" id="COG0187">
    <property type="taxonomic scope" value="Bacteria"/>
</dbReference>
<dbReference type="HOGENOM" id="CLU_006146_4_1_6"/>
<dbReference type="Proteomes" id="UP000000584">
    <property type="component" value="Chromosome 1"/>
</dbReference>
<dbReference type="GO" id="GO:0005694">
    <property type="term" value="C:chromosome"/>
    <property type="evidence" value="ECO:0007669"/>
    <property type="project" value="InterPro"/>
</dbReference>
<dbReference type="GO" id="GO:0005737">
    <property type="term" value="C:cytoplasm"/>
    <property type="evidence" value="ECO:0007669"/>
    <property type="project" value="UniProtKB-SubCell"/>
</dbReference>
<dbReference type="GO" id="GO:0005524">
    <property type="term" value="F:ATP binding"/>
    <property type="evidence" value="ECO:0007669"/>
    <property type="project" value="UniProtKB-UniRule"/>
</dbReference>
<dbReference type="GO" id="GO:0003677">
    <property type="term" value="F:DNA binding"/>
    <property type="evidence" value="ECO:0007669"/>
    <property type="project" value="UniProtKB-KW"/>
</dbReference>
<dbReference type="GO" id="GO:0003918">
    <property type="term" value="F:DNA topoisomerase type II (double strand cut, ATP-hydrolyzing) activity"/>
    <property type="evidence" value="ECO:0000318"/>
    <property type="project" value="GO_Central"/>
</dbReference>
<dbReference type="GO" id="GO:0046872">
    <property type="term" value="F:metal ion binding"/>
    <property type="evidence" value="ECO:0007669"/>
    <property type="project" value="UniProtKB-KW"/>
</dbReference>
<dbReference type="GO" id="GO:0006265">
    <property type="term" value="P:DNA topological change"/>
    <property type="evidence" value="ECO:0000318"/>
    <property type="project" value="GO_Central"/>
</dbReference>
<dbReference type="GO" id="GO:0006261">
    <property type="term" value="P:DNA-templated DNA replication"/>
    <property type="evidence" value="ECO:0007669"/>
    <property type="project" value="UniProtKB-UniRule"/>
</dbReference>
<dbReference type="CDD" id="cd16928">
    <property type="entry name" value="HATPase_GyrB-like"/>
    <property type="match status" value="1"/>
</dbReference>
<dbReference type="CDD" id="cd00822">
    <property type="entry name" value="TopoII_Trans_DNA_gyrase"/>
    <property type="match status" value="1"/>
</dbReference>
<dbReference type="CDD" id="cd03366">
    <property type="entry name" value="TOPRIM_TopoIIA_GyrB"/>
    <property type="match status" value="1"/>
</dbReference>
<dbReference type="FunFam" id="3.30.230.10:FF:000005">
    <property type="entry name" value="DNA gyrase subunit B"/>
    <property type="match status" value="1"/>
</dbReference>
<dbReference type="FunFam" id="3.30.565.10:FF:000002">
    <property type="entry name" value="DNA gyrase subunit B"/>
    <property type="match status" value="1"/>
</dbReference>
<dbReference type="FunFam" id="3.40.50.670:FF:000004">
    <property type="entry name" value="DNA gyrase subunit B"/>
    <property type="match status" value="1"/>
</dbReference>
<dbReference type="FunFam" id="3.40.50.670:FF:000005">
    <property type="entry name" value="DNA gyrase subunit B"/>
    <property type="match status" value="1"/>
</dbReference>
<dbReference type="Gene3D" id="3.10.20.690">
    <property type="match status" value="1"/>
</dbReference>
<dbReference type="Gene3D" id="3.30.230.10">
    <property type="match status" value="1"/>
</dbReference>
<dbReference type="Gene3D" id="3.40.50.670">
    <property type="match status" value="2"/>
</dbReference>
<dbReference type="Gene3D" id="3.30.565.10">
    <property type="entry name" value="Histidine kinase-like ATPase, C-terminal domain"/>
    <property type="match status" value="1"/>
</dbReference>
<dbReference type="HAMAP" id="MF_01898">
    <property type="entry name" value="GyrB"/>
    <property type="match status" value="1"/>
</dbReference>
<dbReference type="InterPro" id="IPR002288">
    <property type="entry name" value="DNA_gyrase_B_C"/>
</dbReference>
<dbReference type="InterPro" id="IPR011557">
    <property type="entry name" value="GyrB"/>
</dbReference>
<dbReference type="InterPro" id="IPR049353">
    <property type="entry name" value="GyrB_hook"/>
</dbReference>
<dbReference type="InterPro" id="IPR041423">
    <property type="entry name" value="GyrB_insert"/>
</dbReference>
<dbReference type="InterPro" id="IPR036890">
    <property type="entry name" value="HATPase_C_sf"/>
</dbReference>
<dbReference type="InterPro" id="IPR020568">
    <property type="entry name" value="Ribosomal_Su5_D2-typ_SF"/>
</dbReference>
<dbReference type="InterPro" id="IPR014721">
    <property type="entry name" value="Ribsml_uS5_D2-typ_fold_subgr"/>
</dbReference>
<dbReference type="InterPro" id="IPR001241">
    <property type="entry name" value="Topo_IIA"/>
</dbReference>
<dbReference type="InterPro" id="IPR013760">
    <property type="entry name" value="Topo_IIA-like_dom_sf"/>
</dbReference>
<dbReference type="InterPro" id="IPR000565">
    <property type="entry name" value="Topo_IIA_B"/>
</dbReference>
<dbReference type="InterPro" id="IPR013759">
    <property type="entry name" value="Topo_IIA_B_C"/>
</dbReference>
<dbReference type="InterPro" id="IPR013506">
    <property type="entry name" value="Topo_IIA_bsu_dom2"/>
</dbReference>
<dbReference type="InterPro" id="IPR018522">
    <property type="entry name" value="TopoIIA_CS"/>
</dbReference>
<dbReference type="InterPro" id="IPR006171">
    <property type="entry name" value="TOPRIM_dom"/>
</dbReference>
<dbReference type="InterPro" id="IPR034160">
    <property type="entry name" value="TOPRIM_GyrB"/>
</dbReference>
<dbReference type="NCBIfam" id="TIGR01059">
    <property type="entry name" value="gyrB"/>
    <property type="match status" value="1"/>
</dbReference>
<dbReference type="NCBIfam" id="NF004189">
    <property type="entry name" value="PRK05644.1"/>
    <property type="match status" value="1"/>
</dbReference>
<dbReference type="NCBIfam" id="NF011501">
    <property type="entry name" value="PRK14939.1"/>
    <property type="match status" value="1"/>
</dbReference>
<dbReference type="PANTHER" id="PTHR45866:SF1">
    <property type="entry name" value="DNA GYRASE SUBUNIT B, MITOCHONDRIAL"/>
    <property type="match status" value="1"/>
</dbReference>
<dbReference type="PANTHER" id="PTHR45866">
    <property type="entry name" value="DNA GYRASE/TOPOISOMERASE SUBUNIT B"/>
    <property type="match status" value="1"/>
</dbReference>
<dbReference type="Pfam" id="PF00204">
    <property type="entry name" value="DNA_gyraseB"/>
    <property type="match status" value="1"/>
</dbReference>
<dbReference type="Pfam" id="PF00986">
    <property type="entry name" value="DNA_gyraseB_C"/>
    <property type="match status" value="1"/>
</dbReference>
<dbReference type="Pfam" id="PF21249">
    <property type="entry name" value="GyrB_hook"/>
    <property type="match status" value="1"/>
</dbReference>
<dbReference type="Pfam" id="PF18053">
    <property type="entry name" value="GyrB_insert"/>
    <property type="match status" value="1"/>
</dbReference>
<dbReference type="Pfam" id="PF02518">
    <property type="entry name" value="HATPase_c"/>
    <property type="match status" value="1"/>
</dbReference>
<dbReference type="Pfam" id="PF01751">
    <property type="entry name" value="Toprim"/>
    <property type="match status" value="1"/>
</dbReference>
<dbReference type="PRINTS" id="PR01159">
    <property type="entry name" value="DNAGYRASEB"/>
</dbReference>
<dbReference type="PRINTS" id="PR00418">
    <property type="entry name" value="TPI2FAMILY"/>
</dbReference>
<dbReference type="SMART" id="SM00387">
    <property type="entry name" value="HATPase_c"/>
    <property type="match status" value="1"/>
</dbReference>
<dbReference type="SMART" id="SM00433">
    <property type="entry name" value="TOP2c"/>
    <property type="match status" value="1"/>
</dbReference>
<dbReference type="SUPFAM" id="SSF55874">
    <property type="entry name" value="ATPase domain of HSP90 chaperone/DNA topoisomerase II/histidine kinase"/>
    <property type="match status" value="1"/>
</dbReference>
<dbReference type="SUPFAM" id="SSF54211">
    <property type="entry name" value="Ribosomal protein S5 domain 2-like"/>
    <property type="match status" value="1"/>
</dbReference>
<dbReference type="SUPFAM" id="SSF56719">
    <property type="entry name" value="Type II DNA topoisomerase"/>
    <property type="match status" value="1"/>
</dbReference>
<dbReference type="PROSITE" id="PS00177">
    <property type="entry name" value="TOPOISOMERASE_II"/>
    <property type="match status" value="1"/>
</dbReference>
<dbReference type="PROSITE" id="PS50880">
    <property type="entry name" value="TOPRIM"/>
    <property type="match status" value="1"/>
</dbReference>
<keyword id="KW-0067">ATP-binding</keyword>
<keyword id="KW-0963">Cytoplasm</keyword>
<keyword id="KW-0238">DNA-binding</keyword>
<keyword id="KW-0413">Isomerase</keyword>
<keyword id="KW-0460">Magnesium</keyword>
<keyword id="KW-0479">Metal-binding</keyword>
<keyword id="KW-0547">Nucleotide-binding</keyword>
<keyword id="KW-1185">Reference proteome</keyword>
<keyword id="KW-0799">Topoisomerase</keyword>
<gene>
    <name evidence="1" type="primary">gyrB</name>
    <name type="ordered locus">VC_0015</name>
</gene>
<sequence>MSNNYDSSSIKVLKGLDAVRKRPGMYIGDTDDGTGLHHMVFEVVDNSIDEALAGYCKDIVVTIHEDNSVSVSDDGRGIPTEMHPEEKVSAAEVIMTVLHAGGKFDDNSYKVSGGLHGVGVSVVNALSEKVLLTIYRGGKIHSQTYHHGVPQAPLAVVGETERTGTTVRFWPSAQTFTNIEFHYDILAKRLRELSFLNSGVSIKLTDEREEDKKDHFMYEGGIQAFVTHLNRNKTPIHEKVFHFNQEREDGISVEVAMQWNDGFQENIYCFTNNIPQRDGGTHLAGFRGALTRTLNNYMDKEGFSKKAQAATSGDDAREGLTAVVSVKVPDPKFSSQTKDKLVSSEVKSAVESAMNEKLADFLAENPSEAKNVCSKIIDAARAREAARKAREMTRRKGALDLAGLPGKLADCQEKDPALSELYIVEGDSAGGSAKQGRNRKNQAILPLKGKILNVEKARFDKMLSSQEVATLITALGCGIGRDEYNPDKLRYHNIIIMTDADVDGSHIRTLLLTFFYRQMPELIERGYIYIAQPPLYKVKKGKQEQYIKDEEAMNQYQVALAMDGAELHVNADAPALAGEPLEKLVQQYNAAIKLVERMSRRYPYAMLHELIYVPRINAELCADKAAVEAWTQRLVEQLNAKEVGASQYSVLVEHNAELNVYLPKIQVRTHGVTHEYLLSADLINSKEYAKLADLSEALDGLIEAGAFIKRGERVQPISSFAAALDWLIKESRRGLSIQRYKGLGEMNPDQLWETTMDPETRRMMQVTIEDAVGADELFTTLMGDQVEPRRAFIETNALKVANLDV</sequence>
<reference key="1">
    <citation type="journal article" date="2000" name="Nature">
        <title>DNA sequence of both chromosomes of the cholera pathogen Vibrio cholerae.</title>
        <authorList>
            <person name="Heidelberg J.F."/>
            <person name="Eisen J.A."/>
            <person name="Nelson W.C."/>
            <person name="Clayton R.A."/>
            <person name="Gwinn M.L."/>
            <person name="Dodson R.J."/>
            <person name="Haft D.H."/>
            <person name="Hickey E.K."/>
            <person name="Peterson J.D."/>
            <person name="Umayam L.A."/>
            <person name="Gill S.R."/>
            <person name="Nelson K.E."/>
            <person name="Read T.D."/>
            <person name="Tettelin H."/>
            <person name="Richardson D.L."/>
            <person name="Ermolaeva M.D."/>
            <person name="Vamathevan J.J."/>
            <person name="Bass S."/>
            <person name="Qin H."/>
            <person name="Dragoi I."/>
            <person name="Sellers P."/>
            <person name="McDonald L.A."/>
            <person name="Utterback T.R."/>
            <person name="Fleischmann R.D."/>
            <person name="Nierman W.C."/>
            <person name="White O."/>
            <person name="Salzberg S.L."/>
            <person name="Smith H.O."/>
            <person name="Colwell R.R."/>
            <person name="Mekalanos J.J."/>
            <person name="Venter J.C."/>
            <person name="Fraser C.M."/>
        </authorList>
    </citation>
    <scope>NUCLEOTIDE SEQUENCE [LARGE SCALE GENOMIC DNA]</scope>
    <source>
        <strain>ATCC 39315 / El Tor Inaba N16961</strain>
    </source>
</reference>
<evidence type="ECO:0000255" key="1">
    <source>
        <dbReference type="HAMAP-Rule" id="MF_01898"/>
    </source>
</evidence>
<comment type="function">
    <text evidence="1">A type II topoisomerase that negatively supercoils closed circular double-stranded (ds) DNA in an ATP-dependent manner to modulate DNA topology and maintain chromosomes in an underwound state. Negative supercoiling favors strand separation, and DNA replication, transcription, recombination and repair, all of which involve strand separation. Also able to catalyze the interconversion of other topological isomers of dsDNA rings, including catenanes and knotted rings. Type II topoisomerases break and join 2 DNA strands simultaneously in an ATP-dependent manner.</text>
</comment>
<comment type="catalytic activity">
    <reaction evidence="1">
        <text>ATP-dependent breakage, passage and rejoining of double-stranded DNA.</text>
        <dbReference type="EC" id="5.6.2.2"/>
    </reaction>
</comment>
<comment type="cofactor">
    <cofactor evidence="1">
        <name>Mg(2+)</name>
        <dbReference type="ChEBI" id="CHEBI:18420"/>
    </cofactor>
    <cofactor evidence="1">
        <name>Mn(2+)</name>
        <dbReference type="ChEBI" id="CHEBI:29035"/>
    </cofactor>
    <cofactor evidence="1">
        <name>Ca(2+)</name>
        <dbReference type="ChEBI" id="CHEBI:29108"/>
    </cofactor>
    <text evidence="1">Binds two Mg(2+) per subunit. The magnesium ions form salt bridges with both the protein and the DNA. Can also accept other divalent metal cations, such as Mn(2+) or Ca(2+).</text>
</comment>
<comment type="subunit">
    <text evidence="1">Heterotetramer, composed of two GyrA and two GyrB chains. In the heterotetramer, GyrA contains the active site tyrosine that forms a transient covalent intermediate with DNA, while GyrB binds cofactors and catalyzes ATP hydrolysis.</text>
</comment>
<comment type="subcellular location">
    <subcellularLocation>
        <location evidence="1">Cytoplasm</location>
    </subcellularLocation>
</comment>
<comment type="miscellaneous">
    <text evidence="1">Few gyrases are as efficient as E.coli at forming negative supercoils. Not all organisms have 2 type II topoisomerases; in organisms with a single type II topoisomerase this enzyme also has to decatenate newly replicated chromosomes.</text>
</comment>
<comment type="similarity">
    <text evidence="1">Belongs to the type II topoisomerase GyrB family.</text>
</comment>
<organism>
    <name type="scientific">Vibrio cholerae serotype O1 (strain ATCC 39315 / El Tor Inaba N16961)</name>
    <dbReference type="NCBI Taxonomy" id="243277"/>
    <lineage>
        <taxon>Bacteria</taxon>
        <taxon>Pseudomonadati</taxon>
        <taxon>Pseudomonadota</taxon>
        <taxon>Gammaproteobacteria</taxon>
        <taxon>Vibrionales</taxon>
        <taxon>Vibrionaceae</taxon>
        <taxon>Vibrio</taxon>
    </lineage>
</organism>
<feature type="chain" id="PRO_0000145358" description="DNA gyrase subunit B">
    <location>
        <begin position="1"/>
        <end position="805"/>
    </location>
</feature>
<feature type="domain" description="Toprim" evidence="1">
    <location>
        <begin position="419"/>
        <end position="534"/>
    </location>
</feature>
<feature type="binding site" evidence="1">
    <location>
        <position position="425"/>
    </location>
    <ligand>
        <name>Mg(2+)</name>
        <dbReference type="ChEBI" id="CHEBI:18420"/>
        <label>1</label>
        <note>catalytic</note>
    </ligand>
</feature>
<feature type="binding site" evidence="1">
    <location>
        <position position="499"/>
    </location>
    <ligand>
        <name>Mg(2+)</name>
        <dbReference type="ChEBI" id="CHEBI:18420"/>
        <label>1</label>
        <note>catalytic</note>
    </ligand>
</feature>
<feature type="binding site" evidence="1">
    <location>
        <position position="499"/>
    </location>
    <ligand>
        <name>Mg(2+)</name>
        <dbReference type="ChEBI" id="CHEBI:18420"/>
        <label>2</label>
    </ligand>
</feature>
<feature type="binding site" evidence="1">
    <location>
        <position position="501"/>
    </location>
    <ligand>
        <name>Mg(2+)</name>
        <dbReference type="ChEBI" id="CHEBI:18420"/>
        <label>2</label>
    </ligand>
</feature>
<feature type="site" description="Interaction with DNA" evidence="1">
    <location>
        <position position="450"/>
    </location>
</feature>
<feature type="site" description="Interaction with DNA" evidence="1">
    <location>
        <position position="453"/>
    </location>
</feature>
<accession>Q9KVX3</accession>
<proteinExistence type="inferred from homology"/>
<name>GYRB_VIBCH</name>
<protein>
    <recommendedName>
        <fullName evidence="1">DNA gyrase subunit B</fullName>
        <ecNumber evidence="1">5.6.2.2</ecNumber>
    </recommendedName>
</protein>